<sequence>MLLSLLIIIPFLSSFFSFFSPRLHNNFPRWIALSGIIATLLVVIQIFFQENYHIFQIRHYPNWNCQLIVPWISRFGIEFNIALDGLSIIMLIFSSFLSIIAIICSWNEIKKNEGFFYFNFMLVFTGIIGVFISCDLFLFFCFWEIMLIPMYFLIALWSDKTEKKKNFLAANKFFLYSQTSGLILLSSILLLVFSHYYSTNILTFNYNLLINKPINIYVEYIVMIGFFLSFAIKMPIVPFHGWLPDIHSRSLSCGSVEIIGVLLKTAPYALLRYNLVLFPDSTKSFSLIAVFWGIISIFYGAWIAFSQTNIKRLIAYSSVSHMGLILIGIYSNNERALQGVVIQMLSNSLTVAALCILSGQIYKRFKTQDMSKMGGLWSCIYWIPGFSLFFSLANLGVPGTGNFIGEFLILSGVFEVFPLVSILATIGIVFSSIYSLNVIQKIFYGPCKQNIKVFFINKQEVWTIIALVFTLVFLGLNPQKIIDVSYNSIHNIQKEFNNSILKIRS</sequence>
<organism>
    <name type="scientific">Buchnera aphidicola subsp. Acyrthosiphon pisum (strain APS)</name>
    <name type="common">Acyrthosiphon pisum symbiotic bacterium</name>
    <dbReference type="NCBI Taxonomy" id="107806"/>
    <lineage>
        <taxon>Bacteria</taxon>
        <taxon>Pseudomonadati</taxon>
        <taxon>Pseudomonadota</taxon>
        <taxon>Gammaproteobacteria</taxon>
        <taxon>Enterobacterales</taxon>
        <taxon>Erwiniaceae</taxon>
        <taxon>Buchnera</taxon>
    </lineage>
</organism>
<gene>
    <name type="primary">nuoM</name>
    <name type="ordered locus">BU165</name>
</gene>
<evidence type="ECO:0000250" key="1"/>
<evidence type="ECO:0000255" key="2"/>
<evidence type="ECO:0000305" key="3"/>
<reference key="1">
    <citation type="journal article" date="2000" name="Nature">
        <title>Genome sequence of the endocellular bacterial symbiont of aphids Buchnera sp. APS.</title>
        <authorList>
            <person name="Shigenobu S."/>
            <person name="Watanabe H."/>
            <person name="Hattori M."/>
            <person name="Sakaki Y."/>
            <person name="Ishikawa H."/>
        </authorList>
    </citation>
    <scope>NUCLEOTIDE SEQUENCE [LARGE SCALE GENOMIC DNA]</scope>
    <source>
        <strain>APS</strain>
    </source>
</reference>
<proteinExistence type="inferred from homology"/>
<protein>
    <recommendedName>
        <fullName>NADH-quinone oxidoreductase subunit M</fullName>
        <ecNumber>7.1.1.-</ecNumber>
    </recommendedName>
    <alternativeName>
        <fullName>NADH dehydrogenase I subunit M</fullName>
    </alternativeName>
    <alternativeName>
        <fullName>NDH-1 subunit M</fullName>
    </alternativeName>
</protein>
<accession>P57263</accession>
<feature type="chain" id="PRO_0000118041" description="NADH-quinone oxidoreductase subunit M">
    <location>
        <begin position="1"/>
        <end position="505"/>
    </location>
</feature>
<feature type="transmembrane region" description="Helical" evidence="2">
    <location>
        <begin position="30"/>
        <end position="50"/>
    </location>
</feature>
<feature type="transmembrane region" description="Helical" evidence="2">
    <location>
        <begin position="86"/>
        <end position="106"/>
    </location>
</feature>
<feature type="transmembrane region" description="Helical" evidence="2">
    <location>
        <begin position="114"/>
        <end position="134"/>
    </location>
</feature>
<feature type="transmembrane region" description="Helical" evidence="2">
    <location>
        <begin position="136"/>
        <end position="156"/>
    </location>
</feature>
<feature type="transmembrane region" description="Helical" evidence="2">
    <location>
        <begin position="173"/>
        <end position="193"/>
    </location>
</feature>
<feature type="transmembrane region" description="Helical" evidence="2">
    <location>
        <begin position="221"/>
        <end position="241"/>
    </location>
</feature>
<feature type="transmembrane region" description="Helical" evidence="2">
    <location>
        <begin position="251"/>
        <end position="271"/>
    </location>
</feature>
<feature type="transmembrane region" description="Helical" evidence="2">
    <location>
        <begin position="285"/>
        <end position="305"/>
    </location>
</feature>
<feature type="transmembrane region" description="Helical" evidence="2">
    <location>
        <begin position="313"/>
        <end position="333"/>
    </location>
</feature>
<feature type="transmembrane region" description="Helical" evidence="2">
    <location>
        <begin position="373"/>
        <end position="393"/>
    </location>
</feature>
<feature type="transmembrane region" description="Helical" evidence="2">
    <location>
        <begin position="409"/>
        <end position="429"/>
    </location>
</feature>
<feature type="transmembrane region" description="Helical" evidence="2">
    <location>
        <begin position="462"/>
        <end position="482"/>
    </location>
</feature>
<keyword id="KW-1003">Cell membrane</keyword>
<keyword id="KW-0472">Membrane</keyword>
<keyword id="KW-0520">NAD</keyword>
<keyword id="KW-0874">Quinone</keyword>
<keyword id="KW-1185">Reference proteome</keyword>
<keyword id="KW-1278">Translocase</keyword>
<keyword id="KW-0812">Transmembrane</keyword>
<keyword id="KW-1133">Transmembrane helix</keyword>
<name>NUOM_BUCAI</name>
<dbReference type="EC" id="7.1.1.-"/>
<dbReference type="EMBL" id="BA000003">
    <property type="protein sequence ID" value="BAB12883.1"/>
    <property type="molecule type" value="Genomic_DNA"/>
</dbReference>
<dbReference type="RefSeq" id="NP_239997.1">
    <property type="nucleotide sequence ID" value="NC_002528.1"/>
</dbReference>
<dbReference type="RefSeq" id="WP_010895981.1">
    <property type="nucleotide sequence ID" value="NC_002528.1"/>
</dbReference>
<dbReference type="SMR" id="P57263"/>
<dbReference type="STRING" id="563178.BUAP5A_163"/>
<dbReference type="EnsemblBacteria" id="BAB12883">
    <property type="protein sequence ID" value="BAB12883"/>
    <property type="gene ID" value="BAB12883"/>
</dbReference>
<dbReference type="KEGG" id="buc:BU165"/>
<dbReference type="PATRIC" id="fig|107806.10.peg.175"/>
<dbReference type="eggNOG" id="COG1008">
    <property type="taxonomic scope" value="Bacteria"/>
</dbReference>
<dbReference type="HOGENOM" id="CLU_007100_4_4_6"/>
<dbReference type="Proteomes" id="UP000001806">
    <property type="component" value="Chromosome"/>
</dbReference>
<dbReference type="GO" id="GO:0005886">
    <property type="term" value="C:plasma membrane"/>
    <property type="evidence" value="ECO:0007669"/>
    <property type="project" value="UniProtKB-SubCell"/>
</dbReference>
<dbReference type="GO" id="GO:0008137">
    <property type="term" value="F:NADH dehydrogenase (ubiquinone) activity"/>
    <property type="evidence" value="ECO:0007669"/>
    <property type="project" value="InterPro"/>
</dbReference>
<dbReference type="GO" id="GO:0048039">
    <property type="term" value="F:ubiquinone binding"/>
    <property type="evidence" value="ECO:0007669"/>
    <property type="project" value="TreeGrafter"/>
</dbReference>
<dbReference type="GO" id="GO:0042773">
    <property type="term" value="P:ATP synthesis coupled electron transport"/>
    <property type="evidence" value="ECO:0007669"/>
    <property type="project" value="InterPro"/>
</dbReference>
<dbReference type="GO" id="GO:0015990">
    <property type="term" value="P:electron transport coupled proton transport"/>
    <property type="evidence" value="ECO:0007669"/>
    <property type="project" value="TreeGrafter"/>
</dbReference>
<dbReference type="InterPro" id="IPR010227">
    <property type="entry name" value="NADH_Q_OxRdtase_chainM/4"/>
</dbReference>
<dbReference type="InterPro" id="IPR003918">
    <property type="entry name" value="NADH_UbQ_OxRdtase"/>
</dbReference>
<dbReference type="InterPro" id="IPR001750">
    <property type="entry name" value="ND/Mrp_TM"/>
</dbReference>
<dbReference type="NCBIfam" id="TIGR01972">
    <property type="entry name" value="NDH_I_M"/>
    <property type="match status" value="1"/>
</dbReference>
<dbReference type="NCBIfam" id="NF004498">
    <property type="entry name" value="PRK05846.1-1"/>
    <property type="match status" value="1"/>
</dbReference>
<dbReference type="PANTHER" id="PTHR43507">
    <property type="entry name" value="NADH-UBIQUINONE OXIDOREDUCTASE CHAIN 4"/>
    <property type="match status" value="1"/>
</dbReference>
<dbReference type="PANTHER" id="PTHR43507:SF1">
    <property type="entry name" value="NADH-UBIQUINONE OXIDOREDUCTASE CHAIN 4"/>
    <property type="match status" value="1"/>
</dbReference>
<dbReference type="Pfam" id="PF00361">
    <property type="entry name" value="Proton_antipo_M"/>
    <property type="match status" value="1"/>
</dbReference>
<dbReference type="PRINTS" id="PR01437">
    <property type="entry name" value="NUOXDRDTASE4"/>
</dbReference>
<comment type="function">
    <text evidence="1">NDH-1 shuttles electrons from NADH, via FMN and iron-sulfur (Fe-S) centers, to quinones in the respiratory chain. Couples the redox reaction to proton translocation (for every two electrons transferred, four hydrogen ions are translocated across the cytoplasmic membrane), and thus conserves the redox energy in a proton gradient (By similarity).</text>
</comment>
<comment type="catalytic activity">
    <reaction>
        <text>a quinone + NADH + 5 H(+)(in) = a quinol + NAD(+) + 4 H(+)(out)</text>
        <dbReference type="Rhea" id="RHEA:57888"/>
        <dbReference type="ChEBI" id="CHEBI:15378"/>
        <dbReference type="ChEBI" id="CHEBI:24646"/>
        <dbReference type="ChEBI" id="CHEBI:57540"/>
        <dbReference type="ChEBI" id="CHEBI:57945"/>
        <dbReference type="ChEBI" id="CHEBI:132124"/>
    </reaction>
</comment>
<comment type="subunit">
    <text evidence="1">Composed of 13 different subunits. Subunits NuoA, H, J, K, L, M, N constitute the membrane sector of the complex (By similarity).</text>
</comment>
<comment type="subcellular location">
    <subcellularLocation>
        <location evidence="3">Cell membrane</location>
        <topology evidence="3">Multi-pass membrane protein</topology>
    </subcellularLocation>
</comment>
<comment type="similarity">
    <text evidence="3">Belongs to the complex I subunit 4 family.</text>
</comment>